<dbReference type="EC" id="1.1.1.10" evidence="3"/>
<dbReference type="EMBL" id="ACJE01000021">
    <property type="protein sequence ID" value="EHA17862.1"/>
    <property type="molecule type" value="Genomic_DNA"/>
</dbReference>
<dbReference type="SMR" id="G3YG17"/>
<dbReference type="STRING" id="380704.G3YG17"/>
<dbReference type="VEuPathDB" id="FungiDB:ASPNIDRAFT2_177736"/>
<dbReference type="HOGENOM" id="CLU_010194_1_3_1"/>
<dbReference type="OrthoDB" id="31113at5052"/>
<dbReference type="SABIO-RK" id="G3YG17"/>
<dbReference type="UniPathway" id="UPA00146">
    <property type="reaction ID" value="UER00576"/>
</dbReference>
<dbReference type="Proteomes" id="UP000009038">
    <property type="component" value="Unassembled WGS sequence"/>
</dbReference>
<dbReference type="GO" id="GO:0050038">
    <property type="term" value="F:L-xylulose reductase (NADPH) activity"/>
    <property type="evidence" value="ECO:0007669"/>
    <property type="project" value="UniProtKB-EC"/>
</dbReference>
<dbReference type="GO" id="GO:0048038">
    <property type="term" value="F:quinone binding"/>
    <property type="evidence" value="ECO:0007669"/>
    <property type="project" value="TreeGrafter"/>
</dbReference>
<dbReference type="GO" id="GO:0006633">
    <property type="term" value="P:fatty acid biosynthetic process"/>
    <property type="evidence" value="ECO:0007669"/>
    <property type="project" value="TreeGrafter"/>
</dbReference>
<dbReference type="GO" id="GO:0019569">
    <property type="term" value="P:L-arabinose catabolic process to xylulose 5-phosphate"/>
    <property type="evidence" value="ECO:0007669"/>
    <property type="project" value="UniProtKB-UniPathway"/>
</dbReference>
<dbReference type="GO" id="GO:0044550">
    <property type="term" value="P:secondary metabolite biosynthetic process"/>
    <property type="evidence" value="ECO:0007669"/>
    <property type="project" value="UniProtKB-ARBA"/>
</dbReference>
<dbReference type="CDD" id="cd05233">
    <property type="entry name" value="SDR_c"/>
    <property type="match status" value="1"/>
</dbReference>
<dbReference type="FunFam" id="3.40.50.720:FF:000374">
    <property type="entry name" value="3-oxoacyl-(Acyl-carrier-protein) reductase"/>
    <property type="match status" value="1"/>
</dbReference>
<dbReference type="Gene3D" id="3.40.50.720">
    <property type="entry name" value="NAD(P)-binding Rossmann-like Domain"/>
    <property type="match status" value="1"/>
</dbReference>
<dbReference type="InterPro" id="IPR036291">
    <property type="entry name" value="NAD(P)-bd_dom_sf"/>
</dbReference>
<dbReference type="InterPro" id="IPR020904">
    <property type="entry name" value="Sc_DH/Rdtase_CS"/>
</dbReference>
<dbReference type="InterPro" id="IPR002347">
    <property type="entry name" value="SDR_fam"/>
</dbReference>
<dbReference type="PANTHER" id="PTHR42760:SF111">
    <property type="entry name" value="3-OXOACYL-(ACYL-CARRIER-PROTEIN) REDUCTASE (AFU_ORTHOLOGUE AFUA_1G10100)"/>
    <property type="match status" value="1"/>
</dbReference>
<dbReference type="PANTHER" id="PTHR42760">
    <property type="entry name" value="SHORT-CHAIN DEHYDROGENASES/REDUCTASES FAMILY MEMBER"/>
    <property type="match status" value="1"/>
</dbReference>
<dbReference type="Pfam" id="PF00106">
    <property type="entry name" value="adh_short"/>
    <property type="match status" value="1"/>
</dbReference>
<dbReference type="PRINTS" id="PR00081">
    <property type="entry name" value="GDHRDH"/>
</dbReference>
<dbReference type="PRINTS" id="PR00080">
    <property type="entry name" value="SDRFAMILY"/>
</dbReference>
<dbReference type="SUPFAM" id="SSF51735">
    <property type="entry name" value="NAD(P)-binding Rossmann-fold domains"/>
    <property type="match status" value="1"/>
</dbReference>
<dbReference type="PROSITE" id="PS00061">
    <property type="entry name" value="ADH_SHORT"/>
    <property type="match status" value="1"/>
</dbReference>
<accession>G3YG17</accession>
<name>LXRA_ASPNA</name>
<gene>
    <name evidence="4" type="primary">lxrA</name>
    <name type="ORF">ASPNIDRAFT_177736</name>
</gene>
<sequence>MSRSLEGKFAIITGGSRGIGEAIAHNLASKGCSLLLNYTSDSSRTRTESLCNTLSTTHKITCIPVQADLSDPAPAVNTIISAAKTHFTSPTTNTLTIDILINNAGVSKDRFLNDPSSGPIDPAYFNWHYTINVLAPLLLTQACAEYLPRKPAHSGRIINISSISSSLGFTGQSVYGGTKAALEAMTRTWARELADVATVNAVNPGPVVGDMYFATGEEFWKQMQGFQDNTPLSKLVDGEEAVEELLSEEQKRLIREKMGGRRPAFTREIAGVVGMLCTEDGAWCTGSVVCANGGLKFT</sequence>
<proteinExistence type="evidence at protein level"/>
<protein>
    <recommendedName>
        <fullName evidence="4">L-xylulose reductase</fullName>
        <ecNumber evidence="3">1.1.1.10</ecNumber>
    </recommendedName>
</protein>
<keyword id="KW-0054">Arabinose catabolism</keyword>
<keyword id="KW-0119">Carbohydrate metabolism</keyword>
<keyword id="KW-0521">NADP</keyword>
<keyword id="KW-0560">Oxidoreductase</keyword>
<organism>
    <name type="scientific">Aspergillus niger (strain ATCC 1015 / CBS 113.46 / FGSC A1144 / LSHB Ac4 / NCTC 3858a / NRRL 328 / USDA 3528.7)</name>
    <dbReference type="NCBI Taxonomy" id="380704"/>
    <lineage>
        <taxon>Eukaryota</taxon>
        <taxon>Fungi</taxon>
        <taxon>Dikarya</taxon>
        <taxon>Ascomycota</taxon>
        <taxon>Pezizomycotina</taxon>
        <taxon>Eurotiomycetes</taxon>
        <taxon>Eurotiomycetidae</taxon>
        <taxon>Eurotiales</taxon>
        <taxon>Aspergillaceae</taxon>
        <taxon>Aspergillus</taxon>
        <taxon>Aspergillus subgen. Circumdati</taxon>
    </lineage>
</organism>
<comment type="function">
    <text evidence="3">L-xylulose reductase involved in the catabolism of L-arabinose through an oxidoreductive pathway. Catalyzes the NADPH-dependent reduction of L-xylulose.</text>
</comment>
<comment type="catalytic activity">
    <reaction evidence="3">
        <text>xylitol + NADP(+) = L-xylulose + NADPH + H(+)</text>
        <dbReference type="Rhea" id="RHEA:17025"/>
        <dbReference type="ChEBI" id="CHEBI:15378"/>
        <dbReference type="ChEBI" id="CHEBI:17151"/>
        <dbReference type="ChEBI" id="CHEBI:17399"/>
        <dbReference type="ChEBI" id="CHEBI:57783"/>
        <dbReference type="ChEBI" id="CHEBI:58349"/>
        <dbReference type="EC" id="1.1.1.10"/>
    </reaction>
</comment>
<comment type="biophysicochemical properties">
    <kinetics>
        <KM evidence="3">25 mM for L-xylulose</KM>
        <Vmax evidence="3">650.0 umol/min/mg enzyme towards L-xylulose</Vmax>
    </kinetics>
</comment>
<comment type="pathway">
    <text evidence="5">Carbohydrate degradation; L-arabinose degradation via L-arabinitol; D-xylulose 5-phosphate from L-arabinose (fungal route): step 3/5.</text>
</comment>
<comment type="induction">
    <text evidence="3">Transcription is repressed by D-glucose and induced by D-xylose and L-arabinose.</text>
</comment>
<comment type="disruption phenotype">
    <text evidence="3">Reduces slightly growth rate on L-arabinose and abolishes L-xylulose reductase activity.</text>
</comment>
<comment type="similarity">
    <text evidence="5">Belongs to the short-chain dehydrogenases/reductases (SDR) family.</text>
</comment>
<evidence type="ECO:0000250" key="1">
    <source>
        <dbReference type="UniProtKB" id="L0E2Z4"/>
    </source>
</evidence>
<evidence type="ECO:0000250" key="2">
    <source>
        <dbReference type="UniProtKB" id="O93868"/>
    </source>
</evidence>
<evidence type="ECO:0000269" key="3">
    <source>
    </source>
</evidence>
<evidence type="ECO:0000303" key="4">
    <source>
    </source>
</evidence>
<evidence type="ECO:0000305" key="5"/>
<reference key="1">
    <citation type="journal article" date="2011" name="Genome Res.">
        <title>Comparative genomics of citric-acid-producing Aspergillus niger ATCC 1015 versus enzyme-producing CBS 513.88.</title>
        <authorList>
            <person name="Andersen M.R."/>
            <person name="Salazar M.P."/>
            <person name="Schaap P.J."/>
            <person name="van de Vondervoort P.J.I."/>
            <person name="Culley D."/>
            <person name="Thykaer J."/>
            <person name="Frisvad J.C."/>
            <person name="Nielsen K.F."/>
            <person name="Albang R."/>
            <person name="Albermann K."/>
            <person name="Berka R.M."/>
            <person name="Braus G.H."/>
            <person name="Braus-Stromeyer S.A."/>
            <person name="Corrochano L.M."/>
            <person name="Dai Z."/>
            <person name="van Dijck P.W.M."/>
            <person name="Hofmann G."/>
            <person name="Lasure L.L."/>
            <person name="Magnuson J.K."/>
            <person name="Menke H."/>
            <person name="Meijer M."/>
            <person name="Meijer S.L."/>
            <person name="Nielsen J.B."/>
            <person name="Nielsen M.L."/>
            <person name="van Ooyen A.J.J."/>
            <person name="Pel H.J."/>
            <person name="Poulsen L."/>
            <person name="Samson R.A."/>
            <person name="Stam H."/>
            <person name="Tsang A."/>
            <person name="van den Brink J.M."/>
            <person name="Atkins A."/>
            <person name="Aerts A."/>
            <person name="Shapiro H."/>
            <person name="Pangilinan J."/>
            <person name="Salamov A."/>
            <person name="Lou Y."/>
            <person name="Lindquist E."/>
            <person name="Lucas S."/>
            <person name="Grimwood J."/>
            <person name="Grigoriev I.V."/>
            <person name="Kubicek C.P."/>
            <person name="Martinez D."/>
            <person name="van Peij N.N.M.E."/>
            <person name="Roubos J.A."/>
            <person name="Nielsen J."/>
            <person name="Baker S.E."/>
        </authorList>
    </citation>
    <scope>NUCLEOTIDE SEQUENCE [LARGE SCALE GENOMIC DNA]</scope>
    <source>
        <strain>ATCC 1015 / CBS 113.46 / FGSC A1144 / LSHB Ac4 / NCTC 3858a / NRRL 328 / USDA 3528.7</strain>
    </source>
</reference>
<reference key="2">
    <citation type="journal article" date="2010" name="FEBS Lett.">
        <title>The 'true' L-xylulose reductase of filamentous fungi identified in Aspergillus niger.</title>
        <authorList>
            <person name="Mojzita D."/>
            <person name="Vuoristo K."/>
            <person name="Koivistoinen O.M."/>
            <person name="Penttilae M."/>
            <person name="Richard P."/>
        </authorList>
    </citation>
    <scope>INDUCTION</scope>
    <scope>DISRUPTION PHENOTYPE</scope>
    <scope>FUNCTION</scope>
    <scope>CATALYTIC ACTIVITY</scope>
    <scope>BIOPHYSICOCHEMICAL PROPERTIES</scope>
</reference>
<feature type="chain" id="PRO_0000433645" description="L-xylulose reductase">
    <location>
        <begin position="1"/>
        <end position="298"/>
    </location>
</feature>
<feature type="active site" description="Proton donor" evidence="2">
    <location>
        <position position="161"/>
    </location>
</feature>
<feature type="active site" description="Proton donor" evidence="2">
    <location>
        <position position="162"/>
    </location>
</feature>
<feature type="active site" description="Proton donor" evidence="2">
    <location>
        <position position="175"/>
    </location>
</feature>
<feature type="active site" description="Lowers pKa of active site Tyr" evidence="2">
    <location>
        <position position="179"/>
    </location>
</feature>
<feature type="binding site" evidence="1">
    <location>
        <position position="19"/>
    </location>
    <ligand>
        <name>NADP(+)</name>
        <dbReference type="ChEBI" id="CHEBI:58349"/>
    </ligand>
</feature>
<feature type="binding site" evidence="1">
    <location>
        <position position="68"/>
    </location>
    <ligand>
        <name>NADP(+)</name>
        <dbReference type="ChEBI" id="CHEBI:58349"/>
    </ligand>
</feature>
<feature type="binding site" evidence="2">
    <location>
        <position position="103"/>
    </location>
    <ligand>
        <name>NADP(+)</name>
        <dbReference type="ChEBI" id="CHEBI:58349"/>
    </ligand>
</feature>
<feature type="binding site" evidence="2">
    <location>
        <position position="175"/>
    </location>
    <ligand>
        <name>NADP(+)</name>
        <dbReference type="ChEBI" id="CHEBI:58349"/>
    </ligand>
</feature>
<feature type="binding site" evidence="2">
    <location>
        <position position="179"/>
    </location>
    <ligand>
        <name>NADP(+)</name>
        <dbReference type="ChEBI" id="CHEBI:58349"/>
    </ligand>
</feature>
<feature type="binding site" evidence="2">
    <location>
        <position position="207"/>
    </location>
    <ligand>
        <name>NADP(+)</name>
        <dbReference type="ChEBI" id="CHEBI:58349"/>
    </ligand>
</feature>